<protein>
    <recommendedName>
        <fullName evidence="1">2,3-bisphosphoglycerate-dependent phosphoglycerate mutase</fullName>
        <shortName evidence="1">BPG-dependent PGAM</shortName>
        <shortName evidence="1">PGAM</shortName>
        <shortName evidence="1">Phosphoglyceromutase</shortName>
        <shortName evidence="1">dPGM</shortName>
        <ecNumber evidence="1">5.4.2.11</ecNumber>
    </recommendedName>
</protein>
<sequence>MYKLVLIRHGESTWNKENRFTGWVDVDLTEQGNREARQAGQLLKEAGYTFDIAYTSVLKRAIRTLWHVQDQMDLMYVPVVHSWRLNERHYGALSGLNKAETAAKYGDEQVLVWRRSYDTPPPALEPGDERAPYADPRYAKVPREQLPLTECLKDTVARVLPLWNESIAPAVKAGKQVLIAAHGNSLRALIKYLDGISDADIVGLNIPNGVPLVYELDESLTPIRHYYLGDQEAIAKAQAAVAQQGKSAA</sequence>
<keyword id="KW-0312">Gluconeogenesis</keyword>
<keyword id="KW-0324">Glycolysis</keyword>
<keyword id="KW-0413">Isomerase</keyword>
<gene>
    <name evidence="1" type="primary">gpmA</name>
    <name type="ordered locus">BMASAVP1_A0181</name>
</gene>
<comment type="function">
    <text evidence="1">Catalyzes the interconversion of 2-phosphoglycerate and 3-phosphoglycerate.</text>
</comment>
<comment type="catalytic activity">
    <reaction evidence="1">
        <text>(2R)-2-phosphoglycerate = (2R)-3-phosphoglycerate</text>
        <dbReference type="Rhea" id="RHEA:15901"/>
        <dbReference type="ChEBI" id="CHEBI:58272"/>
        <dbReference type="ChEBI" id="CHEBI:58289"/>
        <dbReference type="EC" id="5.4.2.11"/>
    </reaction>
</comment>
<comment type="pathway">
    <text evidence="1">Carbohydrate degradation; glycolysis; pyruvate from D-glyceraldehyde 3-phosphate: step 3/5.</text>
</comment>
<comment type="subunit">
    <text evidence="1">Homodimer.</text>
</comment>
<comment type="similarity">
    <text evidence="1">Belongs to the phosphoglycerate mutase family. BPG-dependent PGAM subfamily.</text>
</comment>
<organism>
    <name type="scientific">Burkholderia mallei (strain SAVP1)</name>
    <dbReference type="NCBI Taxonomy" id="320388"/>
    <lineage>
        <taxon>Bacteria</taxon>
        <taxon>Pseudomonadati</taxon>
        <taxon>Pseudomonadota</taxon>
        <taxon>Betaproteobacteria</taxon>
        <taxon>Burkholderiales</taxon>
        <taxon>Burkholderiaceae</taxon>
        <taxon>Burkholderia</taxon>
        <taxon>pseudomallei group</taxon>
    </lineage>
</organism>
<reference key="1">
    <citation type="journal article" date="2010" name="Genome Biol. Evol.">
        <title>Continuing evolution of Burkholderia mallei through genome reduction and large-scale rearrangements.</title>
        <authorList>
            <person name="Losada L."/>
            <person name="Ronning C.M."/>
            <person name="DeShazer D."/>
            <person name="Woods D."/>
            <person name="Fedorova N."/>
            <person name="Kim H.S."/>
            <person name="Shabalina S.A."/>
            <person name="Pearson T.R."/>
            <person name="Brinkac L."/>
            <person name="Tan P."/>
            <person name="Nandi T."/>
            <person name="Crabtree J."/>
            <person name="Badger J."/>
            <person name="Beckstrom-Sternberg S."/>
            <person name="Saqib M."/>
            <person name="Schutzer S.E."/>
            <person name="Keim P."/>
            <person name="Nierman W.C."/>
        </authorList>
    </citation>
    <scope>NUCLEOTIDE SEQUENCE [LARGE SCALE GENOMIC DNA]</scope>
    <source>
        <strain>SAVP1</strain>
    </source>
</reference>
<dbReference type="EC" id="5.4.2.11" evidence="1"/>
<dbReference type="EMBL" id="CP000526">
    <property type="protein sequence ID" value="ABM52363.1"/>
    <property type="molecule type" value="Genomic_DNA"/>
</dbReference>
<dbReference type="RefSeq" id="WP_004198007.1">
    <property type="nucleotide sequence ID" value="NC_008785.1"/>
</dbReference>
<dbReference type="SMR" id="A1UZX9"/>
<dbReference type="GeneID" id="93058961"/>
<dbReference type="KEGG" id="bmv:BMASAVP1_A0181"/>
<dbReference type="HOGENOM" id="CLU_033323_1_1_4"/>
<dbReference type="UniPathway" id="UPA00109">
    <property type="reaction ID" value="UER00186"/>
</dbReference>
<dbReference type="GO" id="GO:0004619">
    <property type="term" value="F:phosphoglycerate mutase activity"/>
    <property type="evidence" value="ECO:0007669"/>
    <property type="project" value="UniProtKB-EC"/>
</dbReference>
<dbReference type="GO" id="GO:0006094">
    <property type="term" value="P:gluconeogenesis"/>
    <property type="evidence" value="ECO:0007669"/>
    <property type="project" value="UniProtKB-UniRule"/>
</dbReference>
<dbReference type="GO" id="GO:0006096">
    <property type="term" value="P:glycolytic process"/>
    <property type="evidence" value="ECO:0007669"/>
    <property type="project" value="UniProtKB-UniRule"/>
</dbReference>
<dbReference type="CDD" id="cd07067">
    <property type="entry name" value="HP_PGM_like"/>
    <property type="match status" value="1"/>
</dbReference>
<dbReference type="FunFam" id="3.40.50.1240:FF:000003">
    <property type="entry name" value="2,3-bisphosphoglycerate-dependent phosphoglycerate mutase"/>
    <property type="match status" value="1"/>
</dbReference>
<dbReference type="Gene3D" id="3.40.50.1240">
    <property type="entry name" value="Phosphoglycerate mutase-like"/>
    <property type="match status" value="1"/>
</dbReference>
<dbReference type="HAMAP" id="MF_01039">
    <property type="entry name" value="PGAM_GpmA"/>
    <property type="match status" value="1"/>
</dbReference>
<dbReference type="InterPro" id="IPR013078">
    <property type="entry name" value="His_Pase_superF_clade-1"/>
</dbReference>
<dbReference type="InterPro" id="IPR029033">
    <property type="entry name" value="His_PPase_superfam"/>
</dbReference>
<dbReference type="InterPro" id="IPR001345">
    <property type="entry name" value="PG/BPGM_mutase_AS"/>
</dbReference>
<dbReference type="InterPro" id="IPR005952">
    <property type="entry name" value="Phosphogly_mut1"/>
</dbReference>
<dbReference type="NCBIfam" id="TIGR01258">
    <property type="entry name" value="pgm_1"/>
    <property type="match status" value="1"/>
</dbReference>
<dbReference type="NCBIfam" id="NF010713">
    <property type="entry name" value="PRK14115.1"/>
    <property type="match status" value="1"/>
</dbReference>
<dbReference type="PANTHER" id="PTHR11931">
    <property type="entry name" value="PHOSPHOGLYCERATE MUTASE"/>
    <property type="match status" value="1"/>
</dbReference>
<dbReference type="Pfam" id="PF00300">
    <property type="entry name" value="His_Phos_1"/>
    <property type="match status" value="2"/>
</dbReference>
<dbReference type="PIRSF" id="PIRSF000709">
    <property type="entry name" value="6PFK_2-Ptase"/>
    <property type="match status" value="1"/>
</dbReference>
<dbReference type="SMART" id="SM00855">
    <property type="entry name" value="PGAM"/>
    <property type="match status" value="1"/>
</dbReference>
<dbReference type="SUPFAM" id="SSF53254">
    <property type="entry name" value="Phosphoglycerate mutase-like"/>
    <property type="match status" value="1"/>
</dbReference>
<dbReference type="PROSITE" id="PS00175">
    <property type="entry name" value="PG_MUTASE"/>
    <property type="match status" value="1"/>
</dbReference>
<accession>A1UZX9</accession>
<name>GPMA_BURMS</name>
<proteinExistence type="inferred from homology"/>
<feature type="chain" id="PRO_1000064041" description="2,3-bisphosphoglycerate-dependent phosphoglycerate mutase">
    <location>
        <begin position="1"/>
        <end position="249"/>
    </location>
</feature>
<feature type="active site" description="Tele-phosphohistidine intermediate" evidence="1">
    <location>
        <position position="9"/>
    </location>
</feature>
<feature type="active site" description="Proton donor/acceptor" evidence="1">
    <location>
        <position position="87"/>
    </location>
</feature>
<feature type="binding site" evidence="1">
    <location>
        <begin position="8"/>
        <end position="15"/>
    </location>
    <ligand>
        <name>substrate</name>
    </ligand>
</feature>
<feature type="binding site" evidence="1">
    <location>
        <begin position="21"/>
        <end position="22"/>
    </location>
    <ligand>
        <name>substrate</name>
    </ligand>
</feature>
<feature type="binding site" evidence="1">
    <location>
        <position position="60"/>
    </location>
    <ligand>
        <name>substrate</name>
    </ligand>
</feature>
<feature type="binding site" evidence="1">
    <location>
        <begin position="87"/>
        <end position="90"/>
    </location>
    <ligand>
        <name>substrate</name>
    </ligand>
</feature>
<feature type="binding site" evidence="1">
    <location>
        <position position="98"/>
    </location>
    <ligand>
        <name>substrate</name>
    </ligand>
</feature>
<feature type="binding site" evidence="1">
    <location>
        <begin position="114"/>
        <end position="115"/>
    </location>
    <ligand>
        <name>substrate</name>
    </ligand>
</feature>
<feature type="binding site" evidence="1">
    <location>
        <begin position="183"/>
        <end position="184"/>
    </location>
    <ligand>
        <name>substrate</name>
    </ligand>
</feature>
<feature type="site" description="Transition state stabilizer" evidence="1">
    <location>
        <position position="182"/>
    </location>
</feature>
<evidence type="ECO:0000255" key="1">
    <source>
        <dbReference type="HAMAP-Rule" id="MF_01039"/>
    </source>
</evidence>